<reference key="1">
    <citation type="journal article" date="1996" name="DNA Res.">
        <title>A 718-kb DNA sequence of the Escherichia coli K-12 genome corresponding to the 12.7-28.0 min region on the linkage map.</title>
        <authorList>
            <person name="Oshima T."/>
            <person name="Aiba H."/>
            <person name="Baba T."/>
            <person name="Fujita K."/>
            <person name="Hayashi K."/>
            <person name="Honjo A."/>
            <person name="Ikemoto K."/>
            <person name="Inada T."/>
            <person name="Itoh T."/>
            <person name="Kajihara M."/>
            <person name="Kanai K."/>
            <person name="Kashimoto K."/>
            <person name="Kimura S."/>
            <person name="Kitagawa M."/>
            <person name="Makino K."/>
            <person name="Masuda S."/>
            <person name="Miki T."/>
            <person name="Mizobuchi K."/>
            <person name="Mori H."/>
            <person name="Motomura K."/>
            <person name="Nakamura Y."/>
            <person name="Nashimoto H."/>
            <person name="Nishio Y."/>
            <person name="Saito N."/>
            <person name="Sampei G."/>
            <person name="Seki Y."/>
            <person name="Tagami H."/>
            <person name="Takemoto K."/>
            <person name="Wada C."/>
            <person name="Yamamoto Y."/>
            <person name="Yano M."/>
            <person name="Horiuchi T."/>
        </authorList>
    </citation>
    <scope>NUCLEOTIDE SEQUENCE [LARGE SCALE GENOMIC DNA]</scope>
    <source>
        <strain>K12 / W3110 / ATCC 27325 / DSM 5911</strain>
    </source>
</reference>
<reference key="2">
    <citation type="journal article" date="1997" name="Science">
        <title>The complete genome sequence of Escherichia coli K-12.</title>
        <authorList>
            <person name="Blattner F.R."/>
            <person name="Plunkett G. III"/>
            <person name="Bloch C.A."/>
            <person name="Perna N.T."/>
            <person name="Burland V."/>
            <person name="Riley M."/>
            <person name="Collado-Vides J."/>
            <person name="Glasner J.D."/>
            <person name="Rode C.K."/>
            <person name="Mayhew G.F."/>
            <person name="Gregor J."/>
            <person name="Davis N.W."/>
            <person name="Kirkpatrick H.A."/>
            <person name="Goeden M.A."/>
            <person name="Rose D.J."/>
            <person name="Mau B."/>
            <person name="Shao Y."/>
        </authorList>
    </citation>
    <scope>NUCLEOTIDE SEQUENCE [LARGE SCALE GENOMIC DNA]</scope>
    <source>
        <strain>K12 / MG1655 / ATCC 47076</strain>
    </source>
</reference>
<reference key="3">
    <citation type="journal article" date="2006" name="Mol. Syst. Biol.">
        <title>Highly accurate genome sequences of Escherichia coli K-12 strains MG1655 and W3110.</title>
        <authorList>
            <person name="Hayashi K."/>
            <person name="Morooka N."/>
            <person name="Yamamoto Y."/>
            <person name="Fujita K."/>
            <person name="Isono K."/>
            <person name="Choi S."/>
            <person name="Ohtsubo E."/>
            <person name="Baba T."/>
            <person name="Wanner B.L."/>
            <person name="Mori H."/>
            <person name="Horiuchi T."/>
        </authorList>
    </citation>
    <scope>NUCLEOTIDE SEQUENCE [LARGE SCALE GENOMIC DNA]</scope>
    <source>
        <strain>K12 / W3110 / ATCC 27325 / DSM 5911</strain>
    </source>
</reference>
<reference key="4">
    <citation type="journal article" date="2005" name="Science">
        <title>Global topology analysis of the Escherichia coli inner membrane proteome.</title>
        <authorList>
            <person name="Daley D.O."/>
            <person name="Rapp M."/>
            <person name="Granseth E."/>
            <person name="Melen K."/>
            <person name="Drew D."/>
            <person name="von Heijne G."/>
        </authorList>
    </citation>
    <scope>TOPOLOGY [LARGE SCALE ANALYSIS]</scope>
    <source>
        <strain>K12 / MG1655 / ATCC 47076</strain>
    </source>
</reference>
<reference key="5">
    <citation type="journal article" date="2000" name="Proc. Natl. Acad. Sci. U.S.A.">
        <title>Nitrogen regulatory protein C-controlled genes of Escherichia coli: scavenging as a defense against nitrogen limitation.</title>
        <authorList>
            <person name="Zimmer D.P."/>
            <person name="Soupene E."/>
            <person name="Lee H.L."/>
            <person name="Wendisch V.F."/>
            <person name="Khodursky A.B."/>
            <person name="Peter B.J."/>
            <person name="Bender R.A."/>
            <person name="Kustu S."/>
        </authorList>
    </citation>
    <scope>INDUCTION</scope>
</reference>
<reference key="6">
    <citation type="journal article" date="2006" name="Proc. Natl. Acad. Sci. U.S.A.">
        <title>A previously undescribed pathway for pyrimidine catabolism.</title>
        <authorList>
            <person name="Loh K.D."/>
            <person name="Gyaneshwar P."/>
            <person name="Markenscoff Papadimitriou E."/>
            <person name="Fong R."/>
            <person name="Kim K.-S."/>
            <person name="Parales R."/>
            <person name="Zhou Z."/>
            <person name="Inwood W."/>
            <person name="Kustu S."/>
        </authorList>
    </citation>
    <scope>FUNCTION IN PYRIMIDINE CATABOLISM AND NOMENCLATURE</scope>
    <source>
        <strain>K12 / MG1655 / ATCC 47076</strain>
    </source>
</reference>
<reference key="7">
    <citation type="journal article" date="2007" name="Mol. Microbiol.">
        <title>RutR is the uracil/thymine-sensing master regulator of a set of genes for synthesis and degradation of pyrimidines.</title>
        <authorList>
            <person name="Shimada T."/>
            <person name="Hirao K."/>
            <person name="Kori A."/>
            <person name="Yamamoto K."/>
            <person name="Ishihama A."/>
        </authorList>
    </citation>
    <scope>INDUCTION</scope>
</reference>
<reference key="8">
    <citation type="journal article" date="2010" name="J. Bacteriol.">
        <title>The Rut pathway for pyrimidine degradation: novel chemistry and toxicity problems.</title>
        <authorList>
            <person name="Kim K.S."/>
            <person name="Pelton J.G."/>
            <person name="Inwood W.B."/>
            <person name="Andersen U."/>
            <person name="Kustu S."/>
            <person name="Wemmer D.E."/>
        </authorList>
    </citation>
    <scope>DISRUPTION PHENOTYPE</scope>
</reference>
<proteinExistence type="evidence at protein level"/>
<accession>P75892</accession>
<accession>Q9R3W5</accession>
<evidence type="ECO:0000255" key="1"/>
<evidence type="ECO:0000269" key="2">
    <source>
    </source>
</evidence>
<evidence type="ECO:0000269" key="3">
    <source>
    </source>
</evidence>
<evidence type="ECO:0000269" key="4">
    <source>
    </source>
</evidence>
<evidence type="ECO:0000269" key="5">
    <source>
    </source>
</evidence>
<evidence type="ECO:0000305" key="6"/>
<protein>
    <recommendedName>
        <fullName>Putative pyrimidine permease RutG</fullName>
    </recommendedName>
</protein>
<gene>
    <name type="primary">rutG</name>
    <name type="synonym">ycdG</name>
    <name type="ordered locus">b1006</name>
    <name type="ordered locus">JW5137</name>
</gene>
<organism>
    <name type="scientific">Escherichia coli (strain K12)</name>
    <dbReference type="NCBI Taxonomy" id="83333"/>
    <lineage>
        <taxon>Bacteria</taxon>
        <taxon>Pseudomonadati</taxon>
        <taxon>Pseudomonadota</taxon>
        <taxon>Gammaproteobacteria</taxon>
        <taxon>Enterobacterales</taxon>
        <taxon>Enterobacteriaceae</taxon>
        <taxon>Escherichia</taxon>
    </lineage>
</organism>
<feature type="chain" id="PRO_0000165964" description="Putative pyrimidine permease RutG">
    <location>
        <begin position="1"/>
        <end position="442"/>
    </location>
</feature>
<feature type="topological domain" description="Cytoplasmic" evidence="1">
    <location>
        <begin position="1"/>
        <end position="57"/>
    </location>
</feature>
<feature type="transmembrane region" description="Helical" evidence="1">
    <location>
        <begin position="58"/>
        <end position="78"/>
    </location>
</feature>
<feature type="topological domain" description="Periplasmic" evidence="1">
    <location>
        <position position="79"/>
    </location>
</feature>
<feature type="transmembrane region" description="Helical" evidence="1">
    <location>
        <begin position="80"/>
        <end position="100"/>
    </location>
</feature>
<feature type="topological domain" description="Cytoplasmic" evidence="1">
    <location>
        <begin position="101"/>
        <end position="110"/>
    </location>
</feature>
<feature type="transmembrane region" description="Helical" evidence="1">
    <location>
        <begin position="111"/>
        <end position="131"/>
    </location>
</feature>
<feature type="topological domain" description="Periplasmic" evidence="1">
    <location>
        <begin position="132"/>
        <end position="140"/>
    </location>
</feature>
<feature type="transmembrane region" description="Helical" evidence="1">
    <location>
        <begin position="141"/>
        <end position="161"/>
    </location>
</feature>
<feature type="topological domain" description="Cytoplasmic" evidence="1">
    <location>
        <begin position="162"/>
        <end position="169"/>
    </location>
</feature>
<feature type="transmembrane region" description="Helical" evidence="1">
    <location>
        <begin position="170"/>
        <end position="190"/>
    </location>
</feature>
<feature type="topological domain" description="Periplasmic" evidence="1">
    <location>
        <begin position="191"/>
        <end position="196"/>
    </location>
</feature>
<feature type="transmembrane region" description="Helical" evidence="1">
    <location>
        <begin position="197"/>
        <end position="217"/>
    </location>
</feature>
<feature type="topological domain" description="Cytoplasmic" evidence="1">
    <location>
        <begin position="218"/>
        <end position="240"/>
    </location>
</feature>
<feature type="transmembrane region" description="Helical" evidence="1">
    <location>
        <begin position="241"/>
        <end position="261"/>
    </location>
</feature>
<feature type="topological domain" description="Periplasmic" evidence="1">
    <location>
        <begin position="262"/>
        <end position="284"/>
    </location>
</feature>
<feature type="transmembrane region" description="Helical" evidence="1">
    <location>
        <begin position="285"/>
        <end position="305"/>
    </location>
</feature>
<feature type="topological domain" description="Cytoplasmic" evidence="1">
    <location>
        <begin position="306"/>
        <end position="318"/>
    </location>
</feature>
<feature type="transmembrane region" description="Helical" evidence="1">
    <location>
        <begin position="319"/>
        <end position="339"/>
    </location>
</feature>
<feature type="topological domain" description="Periplasmic" evidence="1">
    <location>
        <begin position="340"/>
        <end position="347"/>
    </location>
</feature>
<feature type="transmembrane region" description="Helical" evidence="1">
    <location>
        <begin position="348"/>
        <end position="368"/>
    </location>
</feature>
<feature type="topological domain" description="Cytoplasmic" evidence="1">
    <location>
        <begin position="369"/>
        <end position="385"/>
    </location>
</feature>
<feature type="transmembrane region" description="Helical" evidence="1">
    <location>
        <begin position="386"/>
        <end position="406"/>
    </location>
</feature>
<feature type="transmembrane region" description="Helical" evidence="1">
    <location>
        <begin position="407"/>
        <end position="427"/>
    </location>
</feature>
<feature type="topological domain" description="Cytoplasmic" evidence="1">
    <location>
        <begin position="428"/>
        <end position="442"/>
    </location>
</feature>
<sequence>MAMFGFPHWQLKSTSTESGVVAPDERLPFAQTAVMGVQHAVAMFGATVLMPILMGLDPNLSILMSGIGTLLFFFITGGRVPSYLGSSAAFVGVVIAATGFNGQGINPNISIALGGIIACGLVYTVIGLVVMKIGTRWIERLMPPVVTGAVVMAIGLNLAPIAVKSVSASAFDSWMAVMTVLCIGLVAVFTRGMIQRLLILVGLIVACLLYGVMTNVLGLGKAVDFTLVSHAAWFGLPHFSTPAFNGQAMMLIAPVAVILVAENLGHLKAVAGMTGRNMDPYMGRAFVGDGLATMLSGSVGGSGVTTYAENIGVMAVTKVYSTLVFVAAAVIAMLLGFSPKFGALIHTIPAAVIGGASIVVFGLIAVAGARIWVQNRVDLSQNGNLIMVAVTLVLGAGDFALTLGGFTLGGIGTATFGAILLNALLSRKLVDVPPPEVVHQEP</sequence>
<comment type="function">
    <text evidence="3">May function as a proton-driven pyrimidine uptake system.</text>
</comment>
<comment type="subcellular location">
    <subcellularLocation>
        <location>Cell inner membrane</location>
        <topology>Multi-pass membrane protein</topology>
    </subcellularLocation>
</comment>
<comment type="induction">
    <text evidence="2 4">Up-regulated by the nitrogen regulatory protein C (NtrC also called GlnG) and repressed by RutR.</text>
</comment>
<comment type="disruption phenotype">
    <text evidence="5">Cells lacking this gene fail to grow on the nucleobase uracil as the sole nitrogen source but use the nucleoside uridine normally.</text>
</comment>
<comment type="miscellaneous">
    <text>The Rut pathway degrades exogenous pyrimidines as the sole nitrogen source at room temperature but not at 37 degrees Celsius, a restriction that is apparently a consequence of an inadequate ability to remove toxic malonic semialdehyde at the higher temperature (RutE/YdfG function).</text>
</comment>
<comment type="similarity">
    <text evidence="6">Belongs to the nucleobase:cation symporter-2 (NCS2) (TC 2.A.40) family.</text>
</comment>
<dbReference type="EMBL" id="U00096">
    <property type="protein sequence ID" value="AAC74091.2"/>
    <property type="molecule type" value="Genomic_DNA"/>
</dbReference>
<dbReference type="EMBL" id="AP009048">
    <property type="protein sequence ID" value="BAA35773.1"/>
    <property type="molecule type" value="Genomic_DNA"/>
</dbReference>
<dbReference type="PIR" id="D64842">
    <property type="entry name" value="D64842"/>
</dbReference>
<dbReference type="RefSeq" id="NP_415526.4">
    <property type="nucleotide sequence ID" value="NC_000913.3"/>
</dbReference>
<dbReference type="RefSeq" id="WP_001326838.1">
    <property type="nucleotide sequence ID" value="NZ_SSZK01000002.1"/>
</dbReference>
<dbReference type="SMR" id="P75892"/>
<dbReference type="BioGRID" id="4259546">
    <property type="interactions" value="9"/>
</dbReference>
<dbReference type="FunCoup" id="P75892">
    <property type="interactions" value="207"/>
</dbReference>
<dbReference type="STRING" id="511145.b1006"/>
<dbReference type="TCDB" id="2.A.40.1.3">
    <property type="family name" value="the nucleobase/ascorbate transporter (nat) or nucleobase:cation symporter-2 (ncs2) family"/>
</dbReference>
<dbReference type="PaxDb" id="511145-b1006"/>
<dbReference type="EnsemblBacteria" id="AAC74091">
    <property type="protein sequence ID" value="AAC74091"/>
    <property type="gene ID" value="b1006"/>
</dbReference>
<dbReference type="GeneID" id="946589"/>
<dbReference type="KEGG" id="ecj:JW5137"/>
<dbReference type="KEGG" id="eco:b1006"/>
<dbReference type="KEGG" id="ecoc:C3026_06125"/>
<dbReference type="PATRIC" id="fig|511145.12.peg.1044"/>
<dbReference type="EchoBASE" id="EB3613"/>
<dbReference type="eggNOG" id="COG2233">
    <property type="taxonomic scope" value="Bacteria"/>
</dbReference>
<dbReference type="HOGENOM" id="CLU_017959_1_1_6"/>
<dbReference type="InParanoid" id="P75892"/>
<dbReference type="OMA" id="FGLCPKF"/>
<dbReference type="OrthoDB" id="9779092at2"/>
<dbReference type="PhylomeDB" id="P75892"/>
<dbReference type="BioCyc" id="EcoCyc:B1006-MONOMER"/>
<dbReference type="BioCyc" id="MetaCyc:B1006-MONOMER"/>
<dbReference type="PRO" id="PR:P75892"/>
<dbReference type="Proteomes" id="UP000000625">
    <property type="component" value="Chromosome"/>
</dbReference>
<dbReference type="GO" id="GO:0005886">
    <property type="term" value="C:plasma membrane"/>
    <property type="evidence" value="ECO:0000314"/>
    <property type="project" value="EcoCyc"/>
</dbReference>
<dbReference type="GO" id="GO:0005350">
    <property type="term" value="F:pyrimidine nucleobase transmembrane transporter activity"/>
    <property type="evidence" value="ECO:0000314"/>
    <property type="project" value="EcoCyc"/>
</dbReference>
<dbReference type="GO" id="GO:0015218">
    <property type="term" value="F:pyrimidine nucleotide transmembrane transporter activity"/>
    <property type="evidence" value="ECO:0007669"/>
    <property type="project" value="InterPro"/>
</dbReference>
<dbReference type="GO" id="GO:0015210">
    <property type="term" value="F:uracil transmembrane transporter activity"/>
    <property type="evidence" value="ECO:0000315"/>
    <property type="project" value="EcoCyc"/>
</dbReference>
<dbReference type="GO" id="GO:0015505">
    <property type="term" value="F:uracil:monoatomic cation symporter activity"/>
    <property type="evidence" value="ECO:0000314"/>
    <property type="project" value="EcoCyc"/>
</dbReference>
<dbReference type="GO" id="GO:1904082">
    <property type="term" value="P:pyrimidine nucleobase transmembrane transport"/>
    <property type="evidence" value="ECO:0000314"/>
    <property type="project" value="EcoCyc"/>
</dbReference>
<dbReference type="GO" id="GO:0006212">
    <property type="term" value="P:uracil catabolic process"/>
    <property type="evidence" value="ECO:0000315"/>
    <property type="project" value="EcoCyc"/>
</dbReference>
<dbReference type="GO" id="GO:0098721">
    <property type="term" value="P:uracil import across plasma membrane"/>
    <property type="evidence" value="ECO:0000314"/>
    <property type="project" value="EcoCyc"/>
</dbReference>
<dbReference type="InterPro" id="IPR006043">
    <property type="entry name" value="NCS2"/>
</dbReference>
<dbReference type="InterPro" id="IPR019918">
    <property type="entry name" value="Pyrimidine_permease_RutG_pred"/>
</dbReference>
<dbReference type="InterPro" id="IPR006042">
    <property type="entry name" value="Xan_ur_permease"/>
</dbReference>
<dbReference type="NCBIfam" id="TIGR00801">
    <property type="entry name" value="ncs2"/>
    <property type="match status" value="1"/>
</dbReference>
<dbReference type="NCBIfam" id="TIGR03616">
    <property type="entry name" value="RutG"/>
    <property type="match status" value="1"/>
</dbReference>
<dbReference type="PANTHER" id="PTHR42810">
    <property type="entry name" value="PURINE PERMEASE C1399.01C-RELATED"/>
    <property type="match status" value="1"/>
</dbReference>
<dbReference type="PANTHER" id="PTHR42810:SF4">
    <property type="entry name" value="URIC ACID TRANSPORTER UACT"/>
    <property type="match status" value="1"/>
</dbReference>
<dbReference type="Pfam" id="PF00860">
    <property type="entry name" value="Xan_ur_permease"/>
    <property type="match status" value="1"/>
</dbReference>
<dbReference type="PROSITE" id="PS01116">
    <property type="entry name" value="XANTH_URACIL_PERMASE"/>
    <property type="match status" value="1"/>
</dbReference>
<name>RUTG_ECOLI</name>
<keyword id="KW-0997">Cell inner membrane</keyword>
<keyword id="KW-1003">Cell membrane</keyword>
<keyword id="KW-0472">Membrane</keyword>
<keyword id="KW-1185">Reference proteome</keyword>
<keyword id="KW-0769">Symport</keyword>
<keyword id="KW-0812">Transmembrane</keyword>
<keyword id="KW-1133">Transmembrane helix</keyword>
<keyword id="KW-0813">Transport</keyword>